<name>RL24_ALIB4</name>
<evidence type="ECO:0000255" key="1">
    <source>
        <dbReference type="HAMAP-Rule" id="MF_01326"/>
    </source>
</evidence>
<evidence type="ECO:0000305" key="2"/>
<keyword id="KW-1185">Reference proteome</keyword>
<keyword id="KW-0687">Ribonucleoprotein</keyword>
<keyword id="KW-0689">Ribosomal protein</keyword>
<keyword id="KW-0694">RNA-binding</keyword>
<keyword id="KW-0699">rRNA-binding</keyword>
<dbReference type="EMBL" id="CP000361">
    <property type="protein sequence ID" value="ABV67028.1"/>
    <property type="molecule type" value="Genomic_DNA"/>
</dbReference>
<dbReference type="RefSeq" id="WP_004510831.1">
    <property type="nucleotide sequence ID" value="NC_009850.1"/>
</dbReference>
<dbReference type="SMR" id="A8ESV4"/>
<dbReference type="STRING" id="367737.Abu_0763"/>
<dbReference type="GeneID" id="24304472"/>
<dbReference type="KEGG" id="abu:Abu_0763"/>
<dbReference type="eggNOG" id="COG0198">
    <property type="taxonomic scope" value="Bacteria"/>
</dbReference>
<dbReference type="HOGENOM" id="CLU_093315_3_0_7"/>
<dbReference type="Proteomes" id="UP000001136">
    <property type="component" value="Chromosome"/>
</dbReference>
<dbReference type="GO" id="GO:1990904">
    <property type="term" value="C:ribonucleoprotein complex"/>
    <property type="evidence" value="ECO:0007669"/>
    <property type="project" value="UniProtKB-KW"/>
</dbReference>
<dbReference type="GO" id="GO:0005840">
    <property type="term" value="C:ribosome"/>
    <property type="evidence" value="ECO:0007669"/>
    <property type="project" value="UniProtKB-KW"/>
</dbReference>
<dbReference type="GO" id="GO:0019843">
    <property type="term" value="F:rRNA binding"/>
    <property type="evidence" value="ECO:0007669"/>
    <property type="project" value="UniProtKB-UniRule"/>
</dbReference>
<dbReference type="GO" id="GO:0003735">
    <property type="term" value="F:structural constituent of ribosome"/>
    <property type="evidence" value="ECO:0007669"/>
    <property type="project" value="InterPro"/>
</dbReference>
<dbReference type="GO" id="GO:0006412">
    <property type="term" value="P:translation"/>
    <property type="evidence" value="ECO:0007669"/>
    <property type="project" value="UniProtKB-UniRule"/>
</dbReference>
<dbReference type="CDD" id="cd06089">
    <property type="entry name" value="KOW_RPL26"/>
    <property type="match status" value="1"/>
</dbReference>
<dbReference type="Gene3D" id="2.30.30.30">
    <property type="match status" value="1"/>
</dbReference>
<dbReference type="HAMAP" id="MF_01326_B">
    <property type="entry name" value="Ribosomal_uL24_B"/>
    <property type="match status" value="1"/>
</dbReference>
<dbReference type="InterPro" id="IPR005824">
    <property type="entry name" value="KOW"/>
</dbReference>
<dbReference type="InterPro" id="IPR014722">
    <property type="entry name" value="Rib_uL2_dom2"/>
</dbReference>
<dbReference type="InterPro" id="IPR003256">
    <property type="entry name" value="Ribosomal_uL24"/>
</dbReference>
<dbReference type="InterPro" id="IPR005825">
    <property type="entry name" value="Ribosomal_uL24_CS"/>
</dbReference>
<dbReference type="InterPro" id="IPR041988">
    <property type="entry name" value="Ribosomal_uL24_KOW"/>
</dbReference>
<dbReference type="InterPro" id="IPR008991">
    <property type="entry name" value="Translation_prot_SH3-like_sf"/>
</dbReference>
<dbReference type="NCBIfam" id="TIGR01079">
    <property type="entry name" value="rplX_bact"/>
    <property type="match status" value="1"/>
</dbReference>
<dbReference type="PANTHER" id="PTHR12903">
    <property type="entry name" value="MITOCHONDRIAL RIBOSOMAL PROTEIN L24"/>
    <property type="match status" value="1"/>
</dbReference>
<dbReference type="Pfam" id="PF00467">
    <property type="entry name" value="KOW"/>
    <property type="match status" value="1"/>
</dbReference>
<dbReference type="Pfam" id="PF17136">
    <property type="entry name" value="ribosomal_L24"/>
    <property type="match status" value="1"/>
</dbReference>
<dbReference type="SMART" id="SM00739">
    <property type="entry name" value="KOW"/>
    <property type="match status" value="1"/>
</dbReference>
<dbReference type="SUPFAM" id="SSF50104">
    <property type="entry name" value="Translation proteins SH3-like domain"/>
    <property type="match status" value="1"/>
</dbReference>
<dbReference type="PROSITE" id="PS01108">
    <property type="entry name" value="RIBOSOMAL_L24"/>
    <property type="match status" value="1"/>
</dbReference>
<feature type="chain" id="PRO_1000067577" description="Large ribosomal subunit protein uL24">
    <location>
        <begin position="1"/>
        <end position="79"/>
    </location>
</feature>
<reference key="1">
    <citation type="journal article" date="2007" name="PLoS ONE">
        <title>The complete genome sequence and analysis of the Epsilonproteobacterium Arcobacter butzleri.</title>
        <authorList>
            <person name="Miller W.G."/>
            <person name="Parker C.T."/>
            <person name="Rubenfield M."/>
            <person name="Mendz G.L."/>
            <person name="Woesten M.M.S.M."/>
            <person name="Ussery D.W."/>
            <person name="Stolz J.F."/>
            <person name="Binnewies T.T."/>
            <person name="Hallin P.F."/>
            <person name="Wang G."/>
            <person name="Malek J.A."/>
            <person name="Rogosin A."/>
            <person name="Stanker L.H."/>
            <person name="Mandrell R.E."/>
        </authorList>
    </citation>
    <scope>NUCLEOTIDE SEQUENCE [LARGE SCALE GENOMIC DNA]</scope>
    <source>
        <strain>RM4018</strain>
    </source>
</reference>
<organism>
    <name type="scientific">Aliarcobacter butzleri (strain RM4018)</name>
    <name type="common">Arcobacter butzleri</name>
    <dbReference type="NCBI Taxonomy" id="367737"/>
    <lineage>
        <taxon>Bacteria</taxon>
        <taxon>Pseudomonadati</taxon>
        <taxon>Campylobacterota</taxon>
        <taxon>Epsilonproteobacteria</taxon>
        <taxon>Campylobacterales</taxon>
        <taxon>Arcobacteraceae</taxon>
        <taxon>Aliarcobacter</taxon>
    </lineage>
</organism>
<protein>
    <recommendedName>
        <fullName evidence="1">Large ribosomal subunit protein uL24</fullName>
    </recommendedName>
    <alternativeName>
        <fullName evidence="2">50S ribosomal protein L24</fullName>
    </alternativeName>
</protein>
<comment type="function">
    <text evidence="1">One of two assembly initiator proteins, it binds directly to the 5'-end of the 23S rRNA, where it nucleates assembly of the 50S subunit.</text>
</comment>
<comment type="function">
    <text evidence="1">One of the proteins that surrounds the polypeptide exit tunnel on the outside of the subunit.</text>
</comment>
<comment type="subunit">
    <text evidence="1">Part of the 50S ribosomal subunit.</text>
</comment>
<comment type="similarity">
    <text evidence="1">Belongs to the universal ribosomal protein uL24 family.</text>
</comment>
<accession>A8ESV4</accession>
<proteinExistence type="inferred from homology"/>
<gene>
    <name evidence="1" type="primary">rplX</name>
    <name type="ordered locus">Abu_0763</name>
</gene>
<sequence length="79" mass="8559">MAIKLKIKKGDTVKIIAGDDKGKTGEVLAVLPKEKKVIVKDCKVAKKTVKPDQEKNPEGGFVNKEMPIDISNVAKVEGE</sequence>